<name>CPG1_CAEBR</name>
<organism>
    <name type="scientific">Caenorhabditis briggsae</name>
    <dbReference type="NCBI Taxonomy" id="6238"/>
    <lineage>
        <taxon>Eukaryota</taxon>
        <taxon>Metazoa</taxon>
        <taxon>Ecdysozoa</taxon>
        <taxon>Nematoda</taxon>
        <taxon>Chromadorea</taxon>
        <taxon>Rhabditida</taxon>
        <taxon>Rhabditina</taxon>
        <taxon>Rhabditomorpha</taxon>
        <taxon>Rhabditoidea</taxon>
        <taxon>Rhabditidae</taxon>
        <taxon>Peloderinae</taxon>
        <taxon>Caenorhabditis</taxon>
    </lineage>
</organism>
<proteinExistence type="inferred from homology"/>
<dbReference type="EMBL" id="HE600906">
    <property type="protein sequence ID" value="CAP24760.1"/>
    <property type="molecule type" value="Genomic_DNA"/>
</dbReference>
<dbReference type="STRING" id="6238.A8WVU7"/>
<dbReference type="GlyCosmos" id="A8WVU7">
    <property type="glycosylation" value="5 sites, No reported glycans"/>
</dbReference>
<dbReference type="KEGG" id="cbr:CBG_03957"/>
<dbReference type="CTD" id="8581366"/>
<dbReference type="WormBase" id="CBG03957a">
    <property type="protein sequence ID" value="CBP41672"/>
    <property type="gene ID" value="WBGene00026714"/>
    <property type="gene designation" value="Cbr-cpg-1"/>
</dbReference>
<dbReference type="eggNOG" id="ENOG502S9IS">
    <property type="taxonomic scope" value="Eukaryota"/>
</dbReference>
<dbReference type="HOGENOM" id="CLU_033369_0_0_1"/>
<dbReference type="InParanoid" id="A8WVU7"/>
<dbReference type="OMA" id="LRHEDCN"/>
<dbReference type="Proteomes" id="UP000008549">
    <property type="component" value="Unassembled WGS sequence"/>
</dbReference>
<dbReference type="GO" id="GO:0005576">
    <property type="term" value="C:extracellular region"/>
    <property type="evidence" value="ECO:0007669"/>
    <property type="project" value="InterPro"/>
</dbReference>
<dbReference type="GO" id="GO:0008061">
    <property type="term" value="F:chitin binding"/>
    <property type="evidence" value="ECO:0000250"/>
    <property type="project" value="UniProtKB"/>
</dbReference>
<dbReference type="GO" id="GO:0009792">
    <property type="term" value="P:embryo development ending in birth or egg hatching"/>
    <property type="evidence" value="ECO:0000250"/>
    <property type="project" value="UniProtKB"/>
</dbReference>
<dbReference type="GO" id="GO:0000281">
    <property type="term" value="P:mitotic cytokinesis"/>
    <property type="evidence" value="ECO:0000250"/>
    <property type="project" value="UniProtKB"/>
</dbReference>
<dbReference type="FunFam" id="2.170.140.10:FF:000009">
    <property type="entry name" value="Chondroitin proteoglycan 1"/>
    <property type="match status" value="2"/>
</dbReference>
<dbReference type="FunFam" id="3.20.20.80:FF:000339">
    <property type="entry name" value="Chondroitin proteoglycan 1"/>
    <property type="match status" value="1"/>
</dbReference>
<dbReference type="Gene3D" id="2.170.140.10">
    <property type="entry name" value="Chitin binding domain"/>
    <property type="match status" value="1"/>
</dbReference>
<dbReference type="Gene3D" id="3.20.20.80">
    <property type="entry name" value="Glycosidases"/>
    <property type="match status" value="1"/>
</dbReference>
<dbReference type="InterPro" id="IPR002557">
    <property type="entry name" value="Chitin-bd_dom"/>
</dbReference>
<dbReference type="InterPro" id="IPR036508">
    <property type="entry name" value="Chitin-bd_dom_sf"/>
</dbReference>
<dbReference type="InterPro" id="IPR051940">
    <property type="entry name" value="Chitin_bind-dev_reg"/>
</dbReference>
<dbReference type="PANTHER" id="PTHR23301">
    <property type="entry name" value="CHITIN BINDING PERITROPHIN-A"/>
    <property type="match status" value="1"/>
</dbReference>
<dbReference type="PANTHER" id="PTHR23301:SF0">
    <property type="entry name" value="CHITIN-BINDING TYPE-2 DOMAIN-CONTAINING PROTEIN-RELATED"/>
    <property type="match status" value="1"/>
</dbReference>
<dbReference type="Pfam" id="PF01607">
    <property type="entry name" value="CBM_14"/>
    <property type="match status" value="2"/>
</dbReference>
<dbReference type="SMART" id="SM00494">
    <property type="entry name" value="ChtBD2"/>
    <property type="match status" value="2"/>
</dbReference>
<dbReference type="SUPFAM" id="SSF57625">
    <property type="entry name" value="Invertebrate chitin-binding proteins"/>
    <property type="match status" value="2"/>
</dbReference>
<dbReference type="PROSITE" id="PS50940">
    <property type="entry name" value="CHIT_BIND_II"/>
    <property type="match status" value="2"/>
</dbReference>
<gene>
    <name type="primary">cpg-1</name>
    <name type="ORF">CBG03957</name>
</gene>
<keyword id="KW-0131">Cell cycle</keyword>
<keyword id="KW-0132">Cell division</keyword>
<keyword id="KW-0147">Chitin-binding</keyword>
<keyword id="KW-0217">Developmental protein</keyword>
<keyword id="KW-1015">Disulfide bond</keyword>
<keyword id="KW-0325">Glycoprotein</keyword>
<keyword id="KW-0654">Proteoglycan</keyword>
<keyword id="KW-1185">Reference proteome</keyword>
<keyword id="KW-0677">Repeat</keyword>
<keyword id="KW-0732">Signal</keyword>
<accession>A8WVU7</accession>
<sequence>MLPKSVLIVAFLVASSSAQYGVTGMYENLPLESTTVEASGEGSGYNESNDDGFVTGADAVAIDTDCSTKEDGLYAIGGCSPQFLTCSGGIARIMDCPANLIYDQRIIACEYSYNVPECSGVPQDVSSTQAYYPATEETTPAENVTVPAETTVDPYAPVEVATTAAPSEDVPVETTASPYAPVEVETTTAPAEDVTVPEETTVAPYAPVEVYTTAAPANDEPVTRTLLDKTCNGKADGFYSFGQCSDHYIACSNGYTIPMQCPARLSFDEARVICDYTMNVPECQNGSGNYEGSAEETTTEASGELPYSNGYGYEETTTAAADVPSTEGYAPETTAEAWVAPYRLESTTAADVPTTTVGYAPEVIEETTTSEYVEETTTAADVSTTTTVEYVPEVTETTTAPYVEETTTAEYVEETTTAADVPTTTTVAYAPEVTETTTVPYIEETTTVEEATTAADVPTTTGYVPEVIETTTTPYVEETTTAEYVEETSTAADVPTTTTVAYAPEVTETTTVPYIEETTTVEEATTAADVPTTTGYVPEVIETTTTPYVEETTTVEETTTTTVAYAPEVVETTTTPYVEESTTTPYVEETTTALMFHPPQSKATKLPQIHHPASKEHLLSSHAHKTIETVSMDMNLSSSASRDSSSLQSKDDAQLLTKLRSATNRTSTKEATTRTQNMHAHYHRNH</sequence>
<reference evidence="5 6" key="1">
    <citation type="journal article" date="2003" name="PLoS Biol.">
        <title>The genome sequence of Caenorhabditis briggsae: a platform for comparative genomics.</title>
        <authorList>
            <person name="Stein L.D."/>
            <person name="Bao Z."/>
            <person name="Blasiar D."/>
            <person name="Blumenthal T."/>
            <person name="Brent M.R."/>
            <person name="Chen N."/>
            <person name="Chinwalla A."/>
            <person name="Clarke L."/>
            <person name="Clee C."/>
            <person name="Coghlan A."/>
            <person name="Coulson A."/>
            <person name="D'Eustachio P."/>
            <person name="Fitch D.H.A."/>
            <person name="Fulton L.A."/>
            <person name="Fulton R.E."/>
            <person name="Griffiths-Jones S."/>
            <person name="Harris T.W."/>
            <person name="Hillier L.W."/>
            <person name="Kamath R."/>
            <person name="Kuwabara P.E."/>
            <person name="Mardis E.R."/>
            <person name="Marra M.A."/>
            <person name="Miner T.L."/>
            <person name="Minx P."/>
            <person name="Mullikin J.C."/>
            <person name="Plumb R.W."/>
            <person name="Rogers J."/>
            <person name="Schein J.E."/>
            <person name="Sohrmann M."/>
            <person name="Spieth J."/>
            <person name="Stajich J.E."/>
            <person name="Wei C."/>
            <person name="Willey D."/>
            <person name="Wilson R.K."/>
            <person name="Durbin R.M."/>
            <person name="Waterston R.H."/>
        </authorList>
    </citation>
    <scope>NUCLEOTIDE SEQUENCE [LARGE SCALE GENOMIC DNA]</scope>
    <source>
        <strain evidence="6">AF16</strain>
    </source>
</reference>
<comment type="function">
    <text evidence="1">Required for polar body extrusion during cytokinesis in embryo development. Affects cortical granule size. Shown to have roles in meiotic chromosome segregation, osmotic barrier function and polarization in conjunction with cpg-2. Binds chitin (By similarity).</text>
</comment>
<evidence type="ECO:0000250" key="1">
    <source>
        <dbReference type="UniProtKB" id="Q17802"/>
    </source>
</evidence>
<evidence type="ECO:0000255" key="2"/>
<evidence type="ECO:0000255" key="3">
    <source>
        <dbReference type="PROSITE-ProRule" id="PRU00144"/>
    </source>
</evidence>
<evidence type="ECO:0000256" key="4">
    <source>
        <dbReference type="SAM" id="MobiDB-lite"/>
    </source>
</evidence>
<evidence type="ECO:0000305" key="5"/>
<evidence type="ECO:0000312" key="6">
    <source>
        <dbReference type="EMBL" id="CAP24760.1"/>
    </source>
</evidence>
<protein>
    <recommendedName>
        <fullName>Chondroitin proteoglycan 1</fullName>
    </recommendedName>
    <alternativeName>
        <fullName>Cell junction protein 1</fullName>
    </alternativeName>
    <alternativeName>
        <fullName>Cytokinesis protein cej-1</fullName>
    </alternativeName>
</protein>
<feature type="signal peptide" evidence="2">
    <location>
        <begin position="1"/>
        <end position="18"/>
    </location>
</feature>
<feature type="chain" id="PRO_0000320219" description="Chondroitin proteoglycan 1">
    <location>
        <begin position="19"/>
        <end position="686"/>
    </location>
</feature>
<feature type="domain" description="Chitin-binding type-2 1" evidence="3">
    <location>
        <begin position="63"/>
        <end position="120"/>
    </location>
</feature>
<feature type="domain" description="Chitin-binding type-2 2" evidence="3">
    <location>
        <begin position="228"/>
        <end position="285"/>
    </location>
</feature>
<feature type="region of interest" description="Disordered" evidence="4">
    <location>
        <begin position="284"/>
        <end position="312"/>
    </location>
</feature>
<feature type="region of interest" description="Disordered" evidence="4">
    <location>
        <begin position="658"/>
        <end position="686"/>
    </location>
</feature>
<feature type="glycosylation site" description="N-linked (GlcNAc...) asparagine" evidence="2">
    <location>
        <position position="46"/>
    </location>
</feature>
<feature type="glycosylation site" description="N-linked (GlcNAc...) asparagine" evidence="2">
    <location>
        <position position="143"/>
    </location>
</feature>
<feature type="glycosylation site" description="N-linked (GlcNAc...) asparagine" evidence="2">
    <location>
        <position position="285"/>
    </location>
</feature>
<feature type="glycosylation site" description="N-linked (GlcNAc...) asparagine" evidence="2">
    <location>
        <position position="635"/>
    </location>
</feature>
<feature type="glycosylation site" description="N-linked (GlcNAc...) asparagine" evidence="2">
    <location>
        <position position="664"/>
    </location>
</feature>
<feature type="disulfide bond" evidence="3">
    <location>
        <begin position="96"/>
        <end position="109"/>
    </location>
</feature>
<feature type="disulfide bond" evidence="3">
    <location>
        <begin position="261"/>
        <end position="274"/>
    </location>
</feature>